<organismHost>
    <name type="scientific">Homo sapiens</name>
    <name type="common">Human</name>
    <dbReference type="NCBI Taxonomy" id="9606"/>
</organismHost>
<dbReference type="EMBL" id="M35027">
    <property type="protein sequence ID" value="AAA48164.1"/>
    <property type="molecule type" value="Genomic_DNA"/>
</dbReference>
<dbReference type="PIR" id="JQ1772">
    <property type="entry name" value="B42521"/>
</dbReference>
<dbReference type="Proteomes" id="UP000008269">
    <property type="component" value="Segment"/>
</dbReference>
<dbReference type="GO" id="GO:0020002">
    <property type="term" value="C:host cell plasma membrane"/>
    <property type="evidence" value="ECO:0007669"/>
    <property type="project" value="UniProtKB-SubCell"/>
</dbReference>
<dbReference type="GO" id="GO:0016020">
    <property type="term" value="C:membrane"/>
    <property type="evidence" value="ECO:0007669"/>
    <property type="project" value="UniProtKB-KW"/>
</dbReference>
<dbReference type="InterPro" id="IPR010274">
    <property type="entry name" value="Orthopox_A36R"/>
</dbReference>
<dbReference type="Pfam" id="PF05950">
    <property type="entry name" value="Orthopox_A36R"/>
    <property type="match status" value="1"/>
</dbReference>
<reference key="1">
    <citation type="journal article" date="1990" name="Virology">
        <title>The complete DNA sequence of vaccinia virus.</title>
        <authorList>
            <person name="Goebel S.J."/>
            <person name="Johnson G.P."/>
            <person name="Perkus M.E."/>
            <person name="Davis S.W."/>
            <person name="Winslow J.P."/>
            <person name="Paoletti E."/>
        </authorList>
    </citation>
    <scope>NUCLEOTIDE SEQUENCE [LARGE SCALE GENOMIC DNA]</scope>
</reference>
<reference key="2">
    <citation type="journal article" date="1990" name="Virology">
        <title>Appendix to 'The complete DNA sequence of vaccinia virus'.</title>
        <authorList>
            <person name="Goebel S.J."/>
            <person name="Johnson G.P."/>
            <person name="Perkus M.E."/>
            <person name="Davis S.W."/>
            <person name="Winslow J.P."/>
            <person name="Paoletti E."/>
        </authorList>
    </citation>
    <scope>NUCLEOTIDE SEQUENCE [LARGE SCALE GENOMIC DNA]</scope>
</reference>
<proteinExistence type="inferred from homology"/>
<comment type="function">
    <text evidence="1">Involved in the intracellular transport and egress of virions to the host cell surface with help of protein OPG056. Also participates in the formation of actin tails at the plasma membrane to allow efficient actin-based motility and thus cell to cell transmission of viral particles. Recruits host intersectin-1/ITSN1 and activates host CDC42 to drive ARP2/3-mediated actin polymerization.</text>
</comment>
<comment type="subunit">
    <text evidence="1">Interacts with host NCK. Interacts with protein OPG161 (via C-terminus). Interacts with protein OPG056. Interacts (via C-terminus) with host kinesin light chain/KLC1. Interacts with host intersectin-1/ITSN1 and EPS15.</text>
</comment>
<comment type="subcellular location">
    <subcellularLocation>
        <location evidence="1">Host cell membrane</location>
        <topology evidence="1">Single-pass membrane protein</topology>
    </subcellularLocation>
    <text evidence="1">Found exclusively on the wrapped enveloped virion. Absent in the mature virion (MV) and extracellular enveloped virion (EV).</text>
</comment>
<comment type="PTM">
    <text evidence="1">Phosphorylated on Tyr-112 and Tyr-132. Phosphorylations activate the host ARP2-ARP3 complex and lead to actin nucleation.</text>
</comment>
<comment type="similarity">
    <text evidence="3">Belongs to the orthopoxvirus OPG164 protein family.</text>
</comment>
<feature type="chain" id="PRO_0000040599" description="Protein OPG164">
    <location>
        <begin position="1"/>
        <end position="221"/>
    </location>
</feature>
<feature type="topological domain" description="Extracellular">
    <location>
        <position position="1"/>
    </location>
</feature>
<feature type="transmembrane region" description="Helical" evidence="2">
    <location>
        <begin position="2"/>
        <end position="22"/>
    </location>
</feature>
<feature type="topological domain" description="Cytoplasmic">
    <location>
        <begin position="23"/>
        <end position="221"/>
    </location>
</feature>
<feature type="short sequence motif" description="NPF-motif" evidence="1">
    <location>
        <begin position="161"/>
        <end position="163"/>
    </location>
</feature>
<feature type="short sequence motif" description="NPF-motif" evidence="1">
    <location>
        <begin position="176"/>
        <end position="178"/>
    </location>
</feature>
<feature type="short sequence motif" description="NPF-motif" evidence="1">
    <location>
        <begin position="190"/>
        <end position="192"/>
    </location>
</feature>
<feature type="modified residue" description="Phosphotyrosine; by host" evidence="1">
    <location>
        <position position="112"/>
    </location>
</feature>
<feature type="modified residue" description="Phosphotyrosine; by host" evidence="1">
    <location>
        <position position="132"/>
    </location>
</feature>
<protein>
    <recommendedName>
        <fullName>Protein OPG164</fullName>
    </recommendedName>
</protein>
<organism>
    <name type="scientific">Vaccinia virus (strain Copenhagen)</name>
    <name type="common">VACV</name>
    <dbReference type="NCBI Taxonomy" id="10249"/>
    <lineage>
        <taxon>Viruses</taxon>
        <taxon>Varidnaviria</taxon>
        <taxon>Bamfordvirae</taxon>
        <taxon>Nucleocytoviricota</taxon>
        <taxon>Pokkesviricetes</taxon>
        <taxon>Chitovirales</taxon>
        <taxon>Poxviridae</taxon>
        <taxon>Chordopoxvirinae</taxon>
        <taxon>Orthopoxvirus</taxon>
        <taxon>Vaccinia virus</taxon>
    </lineage>
</organism>
<evidence type="ECO:0000250" key="1">
    <source>
        <dbReference type="UniProtKB" id="P68619"/>
    </source>
</evidence>
<evidence type="ECO:0000255" key="2"/>
<evidence type="ECO:0000305" key="3"/>
<keyword id="KW-1032">Host cell membrane</keyword>
<keyword id="KW-1043">Host membrane</keyword>
<keyword id="KW-0945">Host-virus interaction</keyword>
<keyword id="KW-0472">Membrane</keyword>
<keyword id="KW-0597">Phosphoprotein</keyword>
<keyword id="KW-1185">Reference proteome</keyword>
<keyword id="KW-0812">Transmembrane</keyword>
<keyword id="KW-1133">Transmembrane helix</keyword>
<accession>P68618</accession>
<accession>P21059</accession>
<sequence>MMLVPLITVTVVAGTILVCYILYICRKKIRTVYNDNKIIMTKLKKIKSSNSSKSSKSTDSESDWEDHCSAMEQNNDVDNISRNEILDDDSFAGSLIWDNESNVMAPSTEHIYDSVAGSTLLINNDRNEQTIYQNTTVVINETETVEVLNEDTKQNPNYSSNPFVNYNKTSICSKSNPFITELNNKFSENNPFRRAHSDDYLNKQEQDHEHDDIESSVVSLV</sequence>
<gene>
    <name type="primary">OPG164</name>
    <name type="ORF">A36R</name>
</gene>
<name>PG164_VACCC</name>